<protein>
    <recommendedName>
        <fullName evidence="1">sn-glycerol-3-phosphate-binding periplasmic protein UgpB</fullName>
    </recommendedName>
</protein>
<dbReference type="EMBL" id="BX936398">
    <property type="protein sequence ID" value="CAH19478.1"/>
    <property type="molecule type" value="Genomic_DNA"/>
</dbReference>
<dbReference type="RefSeq" id="WP_011191531.1">
    <property type="nucleotide sequence ID" value="NC_006155.1"/>
</dbReference>
<dbReference type="SMR" id="Q66FU7"/>
<dbReference type="GeneID" id="49787780"/>
<dbReference type="KEGG" id="ypo:BZ17_2345"/>
<dbReference type="KEGG" id="yps:YPTB0238"/>
<dbReference type="PATRIC" id="fig|273123.14.peg.2467"/>
<dbReference type="Proteomes" id="UP000001011">
    <property type="component" value="Chromosome"/>
</dbReference>
<dbReference type="GO" id="GO:0030313">
    <property type="term" value="C:cell envelope"/>
    <property type="evidence" value="ECO:0007669"/>
    <property type="project" value="UniProtKB-ARBA"/>
</dbReference>
<dbReference type="GO" id="GO:0042597">
    <property type="term" value="C:periplasmic space"/>
    <property type="evidence" value="ECO:0007669"/>
    <property type="project" value="UniProtKB-SubCell"/>
</dbReference>
<dbReference type="GO" id="GO:0055085">
    <property type="term" value="P:transmembrane transport"/>
    <property type="evidence" value="ECO:0007669"/>
    <property type="project" value="InterPro"/>
</dbReference>
<dbReference type="CDD" id="cd14748">
    <property type="entry name" value="PBP2_UgpB"/>
    <property type="match status" value="1"/>
</dbReference>
<dbReference type="Gene3D" id="3.40.190.10">
    <property type="entry name" value="Periplasmic binding protein-like II"/>
    <property type="match status" value="2"/>
</dbReference>
<dbReference type="InterPro" id="IPR050490">
    <property type="entry name" value="Bact_solute-bd_prot1"/>
</dbReference>
<dbReference type="InterPro" id="IPR006059">
    <property type="entry name" value="SBP"/>
</dbReference>
<dbReference type="InterPro" id="IPR006061">
    <property type="entry name" value="SBP_1_CS"/>
</dbReference>
<dbReference type="NCBIfam" id="NF008211">
    <property type="entry name" value="PRK10974.1"/>
    <property type="match status" value="1"/>
</dbReference>
<dbReference type="PANTHER" id="PTHR43649">
    <property type="entry name" value="ARABINOSE-BINDING PROTEIN-RELATED"/>
    <property type="match status" value="1"/>
</dbReference>
<dbReference type="PANTHER" id="PTHR43649:SF31">
    <property type="entry name" value="SN-GLYCEROL-3-PHOSPHATE-BINDING PERIPLASMIC PROTEIN UGPB"/>
    <property type="match status" value="1"/>
</dbReference>
<dbReference type="Pfam" id="PF13416">
    <property type="entry name" value="SBP_bac_8"/>
    <property type="match status" value="1"/>
</dbReference>
<dbReference type="SUPFAM" id="SSF53850">
    <property type="entry name" value="Periplasmic binding protein-like II"/>
    <property type="match status" value="1"/>
</dbReference>
<dbReference type="PROSITE" id="PS01037">
    <property type="entry name" value="SBP_BACTERIAL_1"/>
    <property type="match status" value="1"/>
</dbReference>
<accession>Q66FU7</accession>
<gene>
    <name type="primary">ugpB</name>
    <name type="ordered locus">YPTB0238</name>
</gene>
<name>UGPB_YERPS</name>
<keyword id="KW-0574">Periplasm</keyword>
<keyword id="KW-0732">Signal</keyword>
<keyword id="KW-0813">Transport</keyword>
<organism>
    <name type="scientific">Yersinia pseudotuberculosis serotype I (strain IP32953)</name>
    <dbReference type="NCBI Taxonomy" id="273123"/>
    <lineage>
        <taxon>Bacteria</taxon>
        <taxon>Pseudomonadati</taxon>
        <taxon>Pseudomonadota</taxon>
        <taxon>Gammaproteobacteria</taxon>
        <taxon>Enterobacterales</taxon>
        <taxon>Yersiniaceae</taxon>
        <taxon>Yersinia</taxon>
    </lineage>
</organism>
<reference key="1">
    <citation type="journal article" date="2004" name="Proc. Natl. Acad. Sci. U.S.A.">
        <title>Insights into the evolution of Yersinia pestis through whole-genome comparison with Yersinia pseudotuberculosis.</title>
        <authorList>
            <person name="Chain P.S.G."/>
            <person name="Carniel E."/>
            <person name="Larimer F.W."/>
            <person name="Lamerdin J."/>
            <person name="Stoutland P.O."/>
            <person name="Regala W.M."/>
            <person name="Georgescu A.M."/>
            <person name="Vergez L.M."/>
            <person name="Land M.L."/>
            <person name="Motin V.L."/>
            <person name="Brubaker R.R."/>
            <person name="Fowler J."/>
            <person name="Hinnebusch J."/>
            <person name="Marceau M."/>
            <person name="Medigue C."/>
            <person name="Simonet M."/>
            <person name="Chenal-Francisque V."/>
            <person name="Souza B."/>
            <person name="Dacheux D."/>
            <person name="Elliott J.M."/>
            <person name="Derbise A."/>
            <person name="Hauser L.J."/>
            <person name="Garcia E."/>
        </authorList>
    </citation>
    <scope>NUCLEOTIDE SEQUENCE [LARGE SCALE GENOMIC DNA]</scope>
    <source>
        <strain>IP32953</strain>
    </source>
</reference>
<comment type="function">
    <text evidence="1">Part of the ABC transporter complex UgpBAEC involved in sn-glycerol-3-phosphate (G3P) import. Binds G3P.</text>
</comment>
<comment type="subunit">
    <text evidence="1">The complex is composed of two ATP-binding proteins (UgpC), two transmembrane proteins (UgpA and UgpE) and a solute-binding protein (UgpB).</text>
</comment>
<comment type="subcellular location">
    <subcellularLocation>
        <location evidence="1">Periplasm</location>
    </subcellularLocation>
</comment>
<comment type="similarity">
    <text evidence="3">Belongs to the bacterial solute-binding protein 1 family.</text>
</comment>
<proteinExistence type="inferred from homology"/>
<evidence type="ECO:0000250" key="1">
    <source>
        <dbReference type="UniProtKB" id="P0AG80"/>
    </source>
</evidence>
<evidence type="ECO:0000255" key="2"/>
<evidence type="ECO:0000305" key="3"/>
<sequence length="439" mass="48574">MFNNSIHKVSICIALTLTFSANAMAVTEIPFWHSMEGELGKEVDSIADRFNQSQPDYKIVPVYKGNYEQSLAAGIAAFRSGKAPAILQVYEVGTATMMASKAIKPVYQVFKDANIDFDESVFVPTVAGYYTDSKTGRLLSQPFNSSTPVLYYNKEAFKKAGLDPEQPPKTWQELAADTAKLRAAGSSCGYASGWQGWIQIENFSAWHGQPIASRNNGFDGTDAVLEFNKPLQIKHIQLLSDMNKKGDFTYFGRKDESTSKFYNGDCAITTASSGSLASIRHYAKFNFGVGMMPYDADAKNAPQNAIIGGASLWVMDGKDKETYKGVAEFLQYLVKPEIAAEWHQKTGYLPITTAAYELTKQQGFYEQNPGADVATRQMLNKPPLPYTKGLRLGNMPQIRTVVDEELEAVWTGKKTPQAALDNSVKRGDVLLRRFEQANK</sequence>
<feature type="signal peptide" evidence="2">
    <location>
        <begin position="1"/>
        <end position="25"/>
    </location>
</feature>
<feature type="chain" id="PRO_5000098366" description="sn-glycerol-3-phosphate-binding periplasmic protein UgpB">
    <location>
        <begin position="26"/>
        <end position="439"/>
    </location>
</feature>
<feature type="binding site" evidence="1">
    <location>
        <position position="67"/>
    </location>
    <ligand>
        <name>sn-glycerol 3-phosphate</name>
        <dbReference type="ChEBI" id="CHEBI:57597"/>
    </ligand>
</feature>
<feature type="binding site" evidence="1">
    <location>
        <position position="91"/>
    </location>
    <ligand>
        <name>sn-glycerol 3-phosphate</name>
        <dbReference type="ChEBI" id="CHEBI:57597"/>
    </ligand>
</feature>
<feature type="binding site" evidence="1">
    <location>
        <position position="146"/>
    </location>
    <ligand>
        <name>sn-glycerol 3-phosphate</name>
        <dbReference type="ChEBI" id="CHEBI:57597"/>
    </ligand>
</feature>
<feature type="binding site" evidence="1">
    <location>
        <position position="272"/>
    </location>
    <ligand>
        <name>sn-glycerol 3-phosphate</name>
        <dbReference type="ChEBI" id="CHEBI:57597"/>
    </ligand>
</feature>
<feature type="binding site" evidence="1">
    <location>
        <position position="309"/>
    </location>
    <ligand>
        <name>sn-glycerol 3-phosphate</name>
        <dbReference type="ChEBI" id="CHEBI:57597"/>
    </ligand>
</feature>
<feature type="binding site" evidence="1">
    <location>
        <position position="348"/>
    </location>
    <ligand>
        <name>sn-glycerol 3-phosphate</name>
        <dbReference type="ChEBI" id="CHEBI:57597"/>
    </ligand>
</feature>
<feature type="binding site" evidence="1">
    <location>
        <position position="399"/>
    </location>
    <ligand>
        <name>sn-glycerol 3-phosphate</name>
        <dbReference type="ChEBI" id="CHEBI:57597"/>
    </ligand>
</feature>